<proteinExistence type="inferred from homology"/>
<gene>
    <name evidence="1" type="primary">ecfA2</name>
    <name type="synonym">cbiO2</name>
    <name type="ordered locus">lwe2550</name>
</gene>
<protein>
    <recommendedName>
        <fullName evidence="1">Energy-coupling factor transporter ATP-binding protein EcfA2</fullName>
        <shortName evidence="1">ECF transporter A component EcfA2</shortName>
        <ecNumber evidence="1">7.-.-.-</ecNumber>
    </recommendedName>
</protein>
<reference key="1">
    <citation type="journal article" date="2006" name="J. Bacteriol.">
        <title>Whole-genome sequence of Listeria welshimeri reveals common steps in genome reduction with Listeria innocua as compared to Listeria monocytogenes.</title>
        <authorList>
            <person name="Hain T."/>
            <person name="Steinweg C."/>
            <person name="Kuenne C.T."/>
            <person name="Billion A."/>
            <person name="Ghai R."/>
            <person name="Chatterjee S.S."/>
            <person name="Domann E."/>
            <person name="Kaerst U."/>
            <person name="Goesmann A."/>
            <person name="Bekel T."/>
            <person name="Bartels D."/>
            <person name="Kaiser O."/>
            <person name="Meyer F."/>
            <person name="Puehler A."/>
            <person name="Weisshaar B."/>
            <person name="Wehland J."/>
            <person name="Liang C."/>
            <person name="Dandekar T."/>
            <person name="Lampidis R."/>
            <person name="Kreft J."/>
            <person name="Goebel W."/>
            <person name="Chakraborty T."/>
        </authorList>
    </citation>
    <scope>NUCLEOTIDE SEQUENCE [LARGE SCALE GENOMIC DNA]</scope>
    <source>
        <strain>ATCC 35897 / DSM 20650 / CCUG 15529 / CIP 8149 / NCTC 11857 / SLCC 5334 / V8</strain>
    </source>
</reference>
<dbReference type="EC" id="7.-.-.-" evidence="1"/>
<dbReference type="EMBL" id="AM263198">
    <property type="protein sequence ID" value="CAK21968.1"/>
    <property type="molecule type" value="Genomic_DNA"/>
</dbReference>
<dbReference type="RefSeq" id="WP_011703274.1">
    <property type="nucleotide sequence ID" value="NC_008555.1"/>
</dbReference>
<dbReference type="SMR" id="A0ALT6"/>
<dbReference type="STRING" id="386043.lwe2550"/>
<dbReference type="GeneID" id="61190474"/>
<dbReference type="KEGG" id="lwe:lwe2550"/>
<dbReference type="eggNOG" id="COG1122">
    <property type="taxonomic scope" value="Bacteria"/>
</dbReference>
<dbReference type="HOGENOM" id="CLU_000604_1_22_9"/>
<dbReference type="OrthoDB" id="9784332at2"/>
<dbReference type="Proteomes" id="UP000000779">
    <property type="component" value="Chromosome"/>
</dbReference>
<dbReference type="GO" id="GO:0043190">
    <property type="term" value="C:ATP-binding cassette (ABC) transporter complex"/>
    <property type="evidence" value="ECO:0007669"/>
    <property type="project" value="TreeGrafter"/>
</dbReference>
<dbReference type="GO" id="GO:0005524">
    <property type="term" value="F:ATP binding"/>
    <property type="evidence" value="ECO:0007669"/>
    <property type="project" value="UniProtKB-KW"/>
</dbReference>
<dbReference type="GO" id="GO:0016887">
    <property type="term" value="F:ATP hydrolysis activity"/>
    <property type="evidence" value="ECO:0007669"/>
    <property type="project" value="InterPro"/>
</dbReference>
<dbReference type="GO" id="GO:0042626">
    <property type="term" value="F:ATPase-coupled transmembrane transporter activity"/>
    <property type="evidence" value="ECO:0007669"/>
    <property type="project" value="TreeGrafter"/>
</dbReference>
<dbReference type="CDD" id="cd03225">
    <property type="entry name" value="ABC_cobalt_CbiO_domain1"/>
    <property type="match status" value="1"/>
</dbReference>
<dbReference type="FunFam" id="3.40.50.300:FF:000224">
    <property type="entry name" value="Energy-coupling factor transporter ATP-binding protein EcfA"/>
    <property type="match status" value="1"/>
</dbReference>
<dbReference type="Gene3D" id="3.40.50.300">
    <property type="entry name" value="P-loop containing nucleotide triphosphate hydrolases"/>
    <property type="match status" value="1"/>
</dbReference>
<dbReference type="InterPro" id="IPR003593">
    <property type="entry name" value="AAA+_ATPase"/>
</dbReference>
<dbReference type="InterPro" id="IPR003439">
    <property type="entry name" value="ABC_transporter-like_ATP-bd"/>
</dbReference>
<dbReference type="InterPro" id="IPR017871">
    <property type="entry name" value="ABC_transporter-like_CS"/>
</dbReference>
<dbReference type="InterPro" id="IPR015856">
    <property type="entry name" value="ABC_transpr_CbiO/EcfA_su"/>
</dbReference>
<dbReference type="InterPro" id="IPR050095">
    <property type="entry name" value="ECF_ABC_transporter_ATP-bd"/>
</dbReference>
<dbReference type="InterPro" id="IPR030946">
    <property type="entry name" value="EcfA2"/>
</dbReference>
<dbReference type="InterPro" id="IPR027417">
    <property type="entry name" value="P-loop_NTPase"/>
</dbReference>
<dbReference type="NCBIfam" id="TIGR04521">
    <property type="entry name" value="ECF_ATPase_2"/>
    <property type="match status" value="1"/>
</dbReference>
<dbReference type="NCBIfam" id="NF010155">
    <property type="entry name" value="PRK13634.1"/>
    <property type="match status" value="1"/>
</dbReference>
<dbReference type="PANTHER" id="PTHR43553:SF27">
    <property type="entry name" value="ENERGY-COUPLING FACTOR TRANSPORTER ATP-BINDING PROTEIN ECFA2"/>
    <property type="match status" value="1"/>
</dbReference>
<dbReference type="PANTHER" id="PTHR43553">
    <property type="entry name" value="HEAVY METAL TRANSPORTER"/>
    <property type="match status" value="1"/>
</dbReference>
<dbReference type="Pfam" id="PF00005">
    <property type="entry name" value="ABC_tran"/>
    <property type="match status" value="1"/>
</dbReference>
<dbReference type="SMART" id="SM00382">
    <property type="entry name" value="AAA"/>
    <property type="match status" value="1"/>
</dbReference>
<dbReference type="SUPFAM" id="SSF52540">
    <property type="entry name" value="P-loop containing nucleoside triphosphate hydrolases"/>
    <property type="match status" value="1"/>
</dbReference>
<dbReference type="PROSITE" id="PS00211">
    <property type="entry name" value="ABC_TRANSPORTER_1"/>
    <property type="match status" value="1"/>
</dbReference>
<dbReference type="PROSITE" id="PS50893">
    <property type="entry name" value="ABC_TRANSPORTER_2"/>
    <property type="match status" value="1"/>
</dbReference>
<dbReference type="PROSITE" id="PS51246">
    <property type="entry name" value="CBIO"/>
    <property type="match status" value="1"/>
</dbReference>
<organism>
    <name type="scientific">Listeria welshimeri serovar 6b (strain ATCC 35897 / DSM 20650 / CCUG 15529 / CIP 8149 / NCTC 11857 / SLCC 5334 / V8)</name>
    <dbReference type="NCBI Taxonomy" id="386043"/>
    <lineage>
        <taxon>Bacteria</taxon>
        <taxon>Bacillati</taxon>
        <taxon>Bacillota</taxon>
        <taxon>Bacilli</taxon>
        <taxon>Bacillales</taxon>
        <taxon>Listeriaceae</taxon>
        <taxon>Listeria</taxon>
    </lineage>
</organism>
<keyword id="KW-0067">ATP-binding</keyword>
<keyword id="KW-1003">Cell membrane</keyword>
<keyword id="KW-0472">Membrane</keyword>
<keyword id="KW-0547">Nucleotide-binding</keyword>
<keyword id="KW-1278">Translocase</keyword>
<keyword id="KW-0813">Transport</keyword>
<comment type="function">
    <text evidence="1">ATP-binding (A) component of a common energy-coupling factor (ECF) ABC-transporter complex. Unlike classic ABC transporters this ECF transporter provides the energy necessary to transport a number of different substrates.</text>
</comment>
<comment type="subunit">
    <text evidence="1">Forms a stable energy-coupling factor (ECF) transporter complex composed of 2 membrane-embedded substrate-binding proteins (S component), 2 ATP-binding proteins (A component) and 2 transmembrane proteins (T component).</text>
</comment>
<comment type="subcellular location">
    <subcellularLocation>
        <location evidence="1">Cell membrane</location>
        <topology evidence="1">Peripheral membrane protein</topology>
    </subcellularLocation>
</comment>
<comment type="similarity">
    <text evidence="1">Belongs to the ABC transporter superfamily. Energy-coupling factor EcfA family.</text>
</comment>
<evidence type="ECO:0000255" key="1">
    <source>
        <dbReference type="HAMAP-Rule" id="MF_01710"/>
    </source>
</evidence>
<feature type="chain" id="PRO_0000287963" description="Energy-coupling factor transporter ATP-binding protein EcfA2">
    <location>
        <begin position="1"/>
        <end position="288"/>
    </location>
</feature>
<feature type="domain" description="ABC transporter" evidence="1">
    <location>
        <begin position="3"/>
        <end position="246"/>
    </location>
</feature>
<feature type="binding site" evidence="1">
    <location>
        <begin position="40"/>
        <end position="47"/>
    </location>
    <ligand>
        <name>ATP</name>
        <dbReference type="ChEBI" id="CHEBI:30616"/>
    </ligand>
</feature>
<name>ECFA2_LISW6</name>
<sequence length="288" mass="31880">MEIKLEQLGYCYQKNSPFEKRALLDVNVSFDSGSYSAIIGHTGSGKSTLLQHLNALLMPTEGKITVGEREIVAGVKQKKLRDLRKKVGIVFQFPEAQLFEETVEKDICFGPMNFGVSEEDAKLRAKKVIYEVGLTEEILSRSPFELSGGQMRRVAIAGVLAMDPEVLVLDEPTAGLDPHGREEIMEMFYNLHKEKGLTTVLVTHSMEDAARYAEKIVLMKAGTVLQIGSPREIFAKPDALVDLGLSVPDVVRFQGLFERKFNVKLTKTCLTIAELITEMAPYLAKGGA</sequence>
<accession>A0ALT6</accession>